<dbReference type="EMBL" id="AE017261">
    <property type="protein sequence ID" value="AAT42907.1"/>
    <property type="molecule type" value="Genomic_DNA"/>
</dbReference>
<dbReference type="RefSeq" id="WP_011177123.1">
    <property type="nucleotide sequence ID" value="NC_005877.1"/>
</dbReference>
<dbReference type="SMR" id="Q6L295"/>
<dbReference type="FunCoup" id="Q6L295">
    <property type="interactions" value="52"/>
</dbReference>
<dbReference type="STRING" id="263820.PTO0322"/>
<dbReference type="PaxDb" id="263820-PTO0322"/>
<dbReference type="GeneID" id="2844441"/>
<dbReference type="KEGG" id="pto:PTO0322"/>
<dbReference type="eggNOG" id="arCOG00780">
    <property type="taxonomic scope" value="Archaea"/>
</dbReference>
<dbReference type="HOGENOM" id="CLU_146465_0_0_2"/>
<dbReference type="InParanoid" id="Q6L295"/>
<dbReference type="OrthoDB" id="11309at2157"/>
<dbReference type="Proteomes" id="UP000000438">
    <property type="component" value="Chromosome"/>
</dbReference>
<dbReference type="GO" id="GO:0022625">
    <property type="term" value="C:cytosolic large ribosomal subunit"/>
    <property type="evidence" value="ECO:0007669"/>
    <property type="project" value="TreeGrafter"/>
</dbReference>
<dbReference type="GO" id="GO:0003723">
    <property type="term" value="F:RNA binding"/>
    <property type="evidence" value="ECO:0007669"/>
    <property type="project" value="TreeGrafter"/>
</dbReference>
<dbReference type="GO" id="GO:0003735">
    <property type="term" value="F:structural constituent of ribosome"/>
    <property type="evidence" value="ECO:0007669"/>
    <property type="project" value="InterPro"/>
</dbReference>
<dbReference type="GO" id="GO:0006412">
    <property type="term" value="P:translation"/>
    <property type="evidence" value="ECO:0007669"/>
    <property type="project" value="UniProtKB-UniRule"/>
</dbReference>
<dbReference type="Gene3D" id="3.100.10.10">
    <property type="match status" value="1"/>
</dbReference>
<dbReference type="HAMAP" id="MF_00329">
    <property type="entry name" value="Ribosomal_eL18"/>
    <property type="match status" value="1"/>
</dbReference>
<dbReference type="InterPro" id="IPR000039">
    <property type="entry name" value="Ribosomal_eL18"/>
</dbReference>
<dbReference type="InterPro" id="IPR021132">
    <property type="entry name" value="Ribosomal_eL18/eL18-A/B/_CS"/>
</dbReference>
<dbReference type="InterPro" id="IPR022947">
    <property type="entry name" value="Ribosomal_eL18_arc"/>
</dbReference>
<dbReference type="InterPro" id="IPR021131">
    <property type="entry name" value="Ribosomal_uL15/eL18"/>
</dbReference>
<dbReference type="InterPro" id="IPR036227">
    <property type="entry name" value="Ribosomal_uL15/eL18_sf"/>
</dbReference>
<dbReference type="NCBIfam" id="NF003079">
    <property type="entry name" value="PRK04005.1"/>
    <property type="match status" value="1"/>
</dbReference>
<dbReference type="PANTHER" id="PTHR10934">
    <property type="entry name" value="60S RIBOSOMAL PROTEIN L18"/>
    <property type="match status" value="1"/>
</dbReference>
<dbReference type="PANTHER" id="PTHR10934:SF2">
    <property type="entry name" value="LARGE RIBOSOMAL SUBUNIT PROTEIN EL18"/>
    <property type="match status" value="1"/>
</dbReference>
<dbReference type="Pfam" id="PF17135">
    <property type="entry name" value="Ribosomal_L18"/>
    <property type="match status" value="1"/>
</dbReference>
<dbReference type="SUPFAM" id="SSF52080">
    <property type="entry name" value="Ribosomal proteins L15p and L18e"/>
    <property type="match status" value="1"/>
</dbReference>
<dbReference type="PROSITE" id="PS01106">
    <property type="entry name" value="RIBOSOMAL_L18E"/>
    <property type="match status" value="1"/>
</dbReference>
<gene>
    <name evidence="1" type="primary">rpl18e</name>
    <name type="ordered locus">PTO0322</name>
</gene>
<sequence length="122" mass="13661">MSVKVEKKTDSYLKDTIQKLLERSRESGSVFWRDIAIRLSSSRKNYATVNLGKLQRIASDDDIIVIPGYLLSSGVFNKKIKVSAFKISEKALKKLNDAGSEFVNLVDLASENPKGTNIKIIR</sequence>
<keyword id="KW-0687">Ribonucleoprotein</keyword>
<keyword id="KW-0689">Ribosomal protein</keyword>
<comment type="similarity">
    <text evidence="1">Belongs to the eukaryotic ribosomal protein eL18 family.</text>
</comment>
<evidence type="ECO:0000255" key="1">
    <source>
        <dbReference type="HAMAP-Rule" id="MF_00329"/>
    </source>
</evidence>
<evidence type="ECO:0000305" key="2"/>
<protein>
    <recommendedName>
        <fullName evidence="1">Large ribosomal subunit protein eL18</fullName>
    </recommendedName>
    <alternativeName>
        <fullName evidence="2">50S ribosomal protein L18e</fullName>
    </alternativeName>
</protein>
<name>RL18E_PICTO</name>
<organism>
    <name type="scientific">Picrophilus torridus (strain ATCC 700027 / DSM 9790 / JCM 10055 / NBRC 100828 / KAW 2/3)</name>
    <dbReference type="NCBI Taxonomy" id="1122961"/>
    <lineage>
        <taxon>Archaea</taxon>
        <taxon>Methanobacteriati</taxon>
        <taxon>Thermoplasmatota</taxon>
        <taxon>Thermoplasmata</taxon>
        <taxon>Thermoplasmatales</taxon>
        <taxon>Picrophilaceae</taxon>
        <taxon>Picrophilus</taxon>
    </lineage>
</organism>
<feature type="chain" id="PRO_0000132796" description="Large ribosomal subunit protein eL18">
    <location>
        <begin position="1"/>
        <end position="122"/>
    </location>
</feature>
<proteinExistence type="inferred from homology"/>
<accession>Q6L295</accession>
<reference key="1">
    <citation type="journal article" date="2004" name="Proc. Natl. Acad. Sci. U.S.A.">
        <title>Genome sequence of Picrophilus torridus and its implications for life around pH 0.</title>
        <authorList>
            <person name="Fuetterer O."/>
            <person name="Angelov A."/>
            <person name="Liesegang H."/>
            <person name="Gottschalk G."/>
            <person name="Schleper C."/>
            <person name="Schepers B."/>
            <person name="Dock C."/>
            <person name="Antranikian G."/>
            <person name="Liebl W."/>
        </authorList>
    </citation>
    <scope>NUCLEOTIDE SEQUENCE [LARGE SCALE GENOMIC DNA]</scope>
    <source>
        <strain>ATCC 700027 / DSM 9790 / JCM 10055 / NBRC 100828 / KAW 2/3</strain>
    </source>
</reference>